<accession>B3Q9S4</accession>
<evidence type="ECO:0000255" key="1">
    <source>
        <dbReference type="HAMAP-Rule" id="MF_00607"/>
    </source>
</evidence>
<name>RSMA_RHOPT</name>
<dbReference type="EC" id="2.1.1.182" evidence="1"/>
<dbReference type="EMBL" id="CP001096">
    <property type="protein sequence ID" value="ACF01977.1"/>
    <property type="molecule type" value="Genomic_DNA"/>
</dbReference>
<dbReference type="RefSeq" id="WP_011158612.1">
    <property type="nucleotide sequence ID" value="NC_011004.1"/>
</dbReference>
<dbReference type="SMR" id="B3Q9S4"/>
<dbReference type="GeneID" id="66894148"/>
<dbReference type="KEGG" id="rpt:Rpal_3476"/>
<dbReference type="HOGENOM" id="CLU_041220_0_1_5"/>
<dbReference type="OrthoDB" id="9814755at2"/>
<dbReference type="Proteomes" id="UP000001725">
    <property type="component" value="Chromosome"/>
</dbReference>
<dbReference type="GO" id="GO:0005829">
    <property type="term" value="C:cytosol"/>
    <property type="evidence" value="ECO:0007669"/>
    <property type="project" value="TreeGrafter"/>
</dbReference>
<dbReference type="GO" id="GO:0052908">
    <property type="term" value="F:16S rRNA (adenine(1518)-N(6)/adenine(1519)-N(6))-dimethyltransferase activity"/>
    <property type="evidence" value="ECO:0007669"/>
    <property type="project" value="UniProtKB-EC"/>
</dbReference>
<dbReference type="GO" id="GO:0003723">
    <property type="term" value="F:RNA binding"/>
    <property type="evidence" value="ECO:0007669"/>
    <property type="project" value="UniProtKB-KW"/>
</dbReference>
<dbReference type="CDD" id="cd02440">
    <property type="entry name" value="AdoMet_MTases"/>
    <property type="match status" value="1"/>
</dbReference>
<dbReference type="FunFam" id="1.10.8.100:FF:000001">
    <property type="entry name" value="Ribosomal RNA small subunit methyltransferase A"/>
    <property type="match status" value="1"/>
</dbReference>
<dbReference type="Gene3D" id="1.10.8.100">
    <property type="entry name" value="Ribosomal RNA adenine dimethylase-like, domain 2"/>
    <property type="match status" value="1"/>
</dbReference>
<dbReference type="Gene3D" id="3.40.50.150">
    <property type="entry name" value="Vaccinia Virus protein VP39"/>
    <property type="match status" value="1"/>
</dbReference>
<dbReference type="HAMAP" id="MF_00607">
    <property type="entry name" value="16SrRNA_methyltr_A"/>
    <property type="match status" value="1"/>
</dbReference>
<dbReference type="InterPro" id="IPR001737">
    <property type="entry name" value="KsgA/Erm"/>
</dbReference>
<dbReference type="InterPro" id="IPR023165">
    <property type="entry name" value="rRNA_Ade_diMease-like_C"/>
</dbReference>
<dbReference type="InterPro" id="IPR020596">
    <property type="entry name" value="rRNA_Ade_Mease_Trfase_CS"/>
</dbReference>
<dbReference type="InterPro" id="IPR020598">
    <property type="entry name" value="rRNA_Ade_methylase_Trfase_N"/>
</dbReference>
<dbReference type="InterPro" id="IPR011530">
    <property type="entry name" value="rRNA_adenine_dimethylase"/>
</dbReference>
<dbReference type="InterPro" id="IPR029063">
    <property type="entry name" value="SAM-dependent_MTases_sf"/>
</dbReference>
<dbReference type="NCBIfam" id="TIGR00755">
    <property type="entry name" value="ksgA"/>
    <property type="match status" value="1"/>
</dbReference>
<dbReference type="PANTHER" id="PTHR11727">
    <property type="entry name" value="DIMETHYLADENOSINE TRANSFERASE"/>
    <property type="match status" value="1"/>
</dbReference>
<dbReference type="PANTHER" id="PTHR11727:SF7">
    <property type="entry name" value="DIMETHYLADENOSINE TRANSFERASE-RELATED"/>
    <property type="match status" value="1"/>
</dbReference>
<dbReference type="Pfam" id="PF00398">
    <property type="entry name" value="RrnaAD"/>
    <property type="match status" value="1"/>
</dbReference>
<dbReference type="SMART" id="SM00650">
    <property type="entry name" value="rADc"/>
    <property type="match status" value="1"/>
</dbReference>
<dbReference type="SUPFAM" id="SSF53335">
    <property type="entry name" value="S-adenosyl-L-methionine-dependent methyltransferases"/>
    <property type="match status" value="1"/>
</dbReference>
<dbReference type="PROSITE" id="PS01131">
    <property type="entry name" value="RRNA_A_DIMETH"/>
    <property type="match status" value="1"/>
</dbReference>
<dbReference type="PROSITE" id="PS51689">
    <property type="entry name" value="SAM_RNA_A_N6_MT"/>
    <property type="match status" value="1"/>
</dbReference>
<keyword id="KW-0963">Cytoplasm</keyword>
<keyword id="KW-0489">Methyltransferase</keyword>
<keyword id="KW-0694">RNA-binding</keyword>
<keyword id="KW-0698">rRNA processing</keyword>
<keyword id="KW-0949">S-adenosyl-L-methionine</keyword>
<keyword id="KW-0808">Transferase</keyword>
<reference key="1">
    <citation type="submission" date="2008-05" db="EMBL/GenBank/DDBJ databases">
        <title>Complete sequence of Rhodopseudomonas palustris TIE-1.</title>
        <authorList>
            <consortium name="US DOE Joint Genome Institute"/>
            <person name="Lucas S."/>
            <person name="Copeland A."/>
            <person name="Lapidus A."/>
            <person name="Glavina del Rio T."/>
            <person name="Dalin E."/>
            <person name="Tice H."/>
            <person name="Pitluck S."/>
            <person name="Chain P."/>
            <person name="Malfatti S."/>
            <person name="Shin M."/>
            <person name="Vergez L."/>
            <person name="Lang D."/>
            <person name="Schmutz J."/>
            <person name="Larimer F."/>
            <person name="Land M."/>
            <person name="Hauser L."/>
            <person name="Kyrpides N."/>
            <person name="Mikhailova N."/>
            <person name="Emerson D."/>
            <person name="Newman D.K."/>
            <person name="Roden E."/>
            <person name="Richardson P."/>
        </authorList>
    </citation>
    <scope>NUCLEOTIDE SEQUENCE [LARGE SCALE GENOMIC DNA]</scope>
    <source>
        <strain>TIE-1</strain>
    </source>
</reference>
<comment type="function">
    <text evidence="1">Specifically dimethylates two adjacent adenosines (A1518 and A1519) in the loop of a conserved hairpin near the 3'-end of 16S rRNA in the 30S particle. May play a critical role in biogenesis of 30S subunits.</text>
</comment>
<comment type="catalytic activity">
    <reaction evidence="1">
        <text>adenosine(1518)/adenosine(1519) in 16S rRNA + 4 S-adenosyl-L-methionine = N(6)-dimethyladenosine(1518)/N(6)-dimethyladenosine(1519) in 16S rRNA + 4 S-adenosyl-L-homocysteine + 4 H(+)</text>
        <dbReference type="Rhea" id="RHEA:19609"/>
        <dbReference type="Rhea" id="RHEA-COMP:10232"/>
        <dbReference type="Rhea" id="RHEA-COMP:10233"/>
        <dbReference type="ChEBI" id="CHEBI:15378"/>
        <dbReference type="ChEBI" id="CHEBI:57856"/>
        <dbReference type="ChEBI" id="CHEBI:59789"/>
        <dbReference type="ChEBI" id="CHEBI:74411"/>
        <dbReference type="ChEBI" id="CHEBI:74493"/>
        <dbReference type="EC" id="2.1.1.182"/>
    </reaction>
</comment>
<comment type="subcellular location">
    <subcellularLocation>
        <location evidence="1">Cytoplasm</location>
    </subcellularLocation>
</comment>
<comment type="similarity">
    <text evidence="1">Belongs to the class I-like SAM-binding methyltransferase superfamily. rRNA adenine N(6)-methyltransferase family. RsmA subfamily.</text>
</comment>
<feature type="chain" id="PRO_1000130312" description="Ribosomal RNA small subunit methyltransferase A">
    <location>
        <begin position="1"/>
        <end position="287"/>
    </location>
</feature>
<feature type="binding site" evidence="1">
    <location>
        <position position="28"/>
    </location>
    <ligand>
        <name>S-adenosyl-L-methionine</name>
        <dbReference type="ChEBI" id="CHEBI:59789"/>
    </ligand>
</feature>
<feature type="binding site" evidence="1">
    <location>
        <position position="30"/>
    </location>
    <ligand>
        <name>S-adenosyl-L-methionine</name>
        <dbReference type="ChEBI" id="CHEBI:59789"/>
    </ligand>
</feature>
<feature type="binding site" evidence="1">
    <location>
        <position position="55"/>
    </location>
    <ligand>
        <name>S-adenosyl-L-methionine</name>
        <dbReference type="ChEBI" id="CHEBI:59789"/>
    </ligand>
</feature>
<feature type="binding site" evidence="1">
    <location>
        <position position="77"/>
    </location>
    <ligand>
        <name>S-adenosyl-L-methionine</name>
        <dbReference type="ChEBI" id="CHEBI:59789"/>
    </ligand>
</feature>
<feature type="binding site" evidence="1">
    <location>
        <position position="103"/>
    </location>
    <ligand>
        <name>S-adenosyl-L-methionine</name>
        <dbReference type="ChEBI" id="CHEBI:59789"/>
    </ligand>
</feature>
<feature type="binding site" evidence="1">
    <location>
        <position position="123"/>
    </location>
    <ligand>
        <name>S-adenosyl-L-methionine</name>
        <dbReference type="ChEBI" id="CHEBI:59789"/>
    </ligand>
</feature>
<organism>
    <name type="scientific">Rhodopseudomonas palustris (strain TIE-1)</name>
    <dbReference type="NCBI Taxonomy" id="395960"/>
    <lineage>
        <taxon>Bacteria</taxon>
        <taxon>Pseudomonadati</taxon>
        <taxon>Pseudomonadota</taxon>
        <taxon>Alphaproteobacteria</taxon>
        <taxon>Hyphomicrobiales</taxon>
        <taxon>Nitrobacteraceae</taxon>
        <taxon>Rhodopseudomonas</taxon>
    </lineage>
</organism>
<gene>
    <name evidence="1" type="primary">rsmA</name>
    <name evidence="1" type="synonym">ksgA</name>
    <name type="ordered locus">Rpal_3476</name>
</gene>
<protein>
    <recommendedName>
        <fullName evidence="1">Ribosomal RNA small subunit methyltransferase A</fullName>
        <ecNumber evidence="1">2.1.1.182</ecNumber>
    </recommendedName>
    <alternativeName>
        <fullName evidence="1">16S rRNA (adenine(1518)-N(6)/adenine(1519)-N(6))-dimethyltransferase</fullName>
    </alternativeName>
    <alternativeName>
        <fullName evidence="1">16S rRNA dimethyladenosine transferase</fullName>
    </alternativeName>
    <alternativeName>
        <fullName evidence="1">16S rRNA dimethylase</fullName>
    </alternativeName>
    <alternativeName>
        <fullName evidence="1">S-adenosylmethionine-6-N', N'-adenosyl(rRNA) dimethyltransferase</fullName>
    </alternativeName>
</protein>
<sequence length="287" mass="31208">MSAIDDLPPLREVIRRHDLAARKSLGQNFLLDLNLTARIARAAGPLEGVTVVEIGPGPGGLTRALLATGAKRVIAIERDERALGALEEIAAHYPGRLDIISGDAMEFDPRPLLNGDRARIVANLPYNIATPLLIGWLCAEPWPPWYEMMVLMFQREVAQRIVAHHDDDAYGRLAVLANWRAETQMLFDISPSAFVPPPKVTSSVVRLVPRAQPEPCDRAALEQVAAAAFGQRRKMLRQSLKSLGVDPAQLTAAAGIDPARRAETVPVSGFVAMANELANSRAIRTQA</sequence>
<proteinExistence type="inferred from homology"/>